<dbReference type="EMBL" id="AAAB01008859">
    <property type="protein sequence ID" value="EAL40950.4"/>
    <property type="molecule type" value="Genomic_DNA"/>
</dbReference>
<dbReference type="STRING" id="7165.Q5TTP0"/>
<dbReference type="PaxDb" id="7165-AGAP002309-PA"/>
<dbReference type="EnsemblMetazoa" id="AGAP002309-RA">
    <property type="protein sequence ID" value="AGAP002309-PA"/>
    <property type="gene ID" value="AGAP002309"/>
</dbReference>
<dbReference type="GeneID" id="3290597"/>
<dbReference type="KEGG" id="aga:3290597"/>
<dbReference type="CTD" id="26067056"/>
<dbReference type="VEuPathDB" id="VectorBase:AGAMI1_009209"/>
<dbReference type="VEuPathDB" id="VectorBase:AGAP002309"/>
<dbReference type="eggNOG" id="KOG0274">
    <property type="taxonomic scope" value="Eukaryota"/>
</dbReference>
<dbReference type="HOGENOM" id="CLU_006741_0_1_1"/>
<dbReference type="InParanoid" id="Q5TTP0"/>
<dbReference type="OMA" id="MQPGKIH"/>
<dbReference type="PhylomeDB" id="Q5TTP0"/>
<dbReference type="Proteomes" id="UP000007062">
    <property type="component" value="Chromosome 2R"/>
</dbReference>
<dbReference type="Gene3D" id="1.10.238.10">
    <property type="entry name" value="EF-hand"/>
    <property type="match status" value="1"/>
</dbReference>
<dbReference type="Gene3D" id="2.130.10.10">
    <property type="entry name" value="YVTN repeat-like/Quinoprotein amine dehydrogenase"/>
    <property type="match status" value="3"/>
</dbReference>
<dbReference type="InterPro" id="IPR011992">
    <property type="entry name" value="EF-hand-dom_pair"/>
</dbReference>
<dbReference type="InterPro" id="IPR051242">
    <property type="entry name" value="WD-EF-hand_domain"/>
</dbReference>
<dbReference type="InterPro" id="IPR015943">
    <property type="entry name" value="WD40/YVTN_repeat-like_dom_sf"/>
</dbReference>
<dbReference type="InterPro" id="IPR019775">
    <property type="entry name" value="WD40_repeat_CS"/>
</dbReference>
<dbReference type="InterPro" id="IPR036322">
    <property type="entry name" value="WD40_repeat_dom_sf"/>
</dbReference>
<dbReference type="InterPro" id="IPR001680">
    <property type="entry name" value="WD40_rpt"/>
</dbReference>
<dbReference type="PANTHER" id="PTHR44324:SF6">
    <property type="entry name" value="EF-HAND CALCIUM BINDING DOMAIN 8"/>
    <property type="match status" value="1"/>
</dbReference>
<dbReference type="PANTHER" id="PTHR44324">
    <property type="entry name" value="WD40 REPEAT DOMAIN 95"/>
    <property type="match status" value="1"/>
</dbReference>
<dbReference type="Pfam" id="PF00400">
    <property type="entry name" value="WD40"/>
    <property type="match status" value="3"/>
</dbReference>
<dbReference type="SMART" id="SM00320">
    <property type="entry name" value="WD40"/>
    <property type="match status" value="7"/>
</dbReference>
<dbReference type="SUPFAM" id="SSF47473">
    <property type="entry name" value="EF-hand"/>
    <property type="match status" value="1"/>
</dbReference>
<dbReference type="SUPFAM" id="SSF50978">
    <property type="entry name" value="WD40 repeat-like"/>
    <property type="match status" value="2"/>
</dbReference>
<dbReference type="PROSITE" id="PS00678">
    <property type="entry name" value="WD_REPEATS_1"/>
    <property type="match status" value="2"/>
</dbReference>
<dbReference type="PROSITE" id="PS50082">
    <property type="entry name" value="WD_REPEATS_2"/>
    <property type="match status" value="5"/>
</dbReference>
<dbReference type="PROSITE" id="PS50294">
    <property type="entry name" value="WD_REPEATS_REGION"/>
    <property type="match status" value="2"/>
</dbReference>
<proteinExistence type="predicted"/>
<evidence type="ECO:0000250" key="1">
    <source>
        <dbReference type="UniProtKB" id="B4F7L9"/>
    </source>
</evidence>
<evidence type="ECO:0000255" key="2"/>
<feature type="chain" id="PRO_0000377419" description="WD repeat-containing protein on Y chromosome">
    <location>
        <begin position="1"/>
        <end position="1059"/>
    </location>
</feature>
<feature type="repeat" description="WD 1" evidence="2">
    <location>
        <begin position="121"/>
        <end position="161"/>
    </location>
</feature>
<feature type="repeat" description="WD 2" evidence="2">
    <location>
        <begin position="170"/>
        <end position="209"/>
    </location>
</feature>
<feature type="repeat" description="WD 3" evidence="2">
    <location>
        <begin position="214"/>
        <end position="256"/>
    </location>
</feature>
<feature type="repeat" description="WD 4" evidence="2">
    <location>
        <begin position="344"/>
        <end position="383"/>
    </location>
</feature>
<feature type="repeat" description="WD 5" evidence="2">
    <location>
        <begin position="387"/>
        <end position="426"/>
    </location>
</feature>
<feature type="repeat" description="WD 6" evidence="2">
    <location>
        <begin position="476"/>
        <end position="515"/>
    </location>
</feature>
<feature type="repeat" description="WD 7" evidence="2">
    <location>
        <begin position="528"/>
        <end position="567"/>
    </location>
</feature>
<feature type="repeat" description="WD 8" evidence="2">
    <location>
        <begin position="616"/>
        <end position="658"/>
    </location>
</feature>
<feature type="repeat" description="WD 9" evidence="2">
    <location>
        <begin position="714"/>
        <end position="759"/>
    </location>
</feature>
<feature type="repeat" description="WD 10" evidence="2">
    <location>
        <begin position="766"/>
        <end position="805"/>
    </location>
</feature>
<feature type="repeat" description="WD 11" evidence="2">
    <location>
        <begin position="849"/>
        <end position="888"/>
    </location>
</feature>
<gene>
    <name evidence="1" type="primary">WDY</name>
    <name type="ORF">AGAP002309</name>
</gene>
<name>WDY_ANOGA</name>
<keyword id="KW-1185">Reference proteome</keyword>
<keyword id="KW-0677">Repeat</keyword>
<keyword id="KW-0853">WD repeat</keyword>
<accession>Q5TTP0</accession>
<sequence length="1059" mass="119800">MAGRLSTADADREIHRFVTREQIDQLHEQFRARNNRLTLDELRELLAELGLFYTEDEYRTLCLQINTDHDRYCQWDELLSYLILGFQDDDPHAVKQSLDPPIAGDLCVKLRRQVYNIVKVDFCPMVYYDGSISWSQGHWITTSREGVIQYWTEDWKPALTARSVPSSLKRSKTWVLDTVPLPDLSMFCVTGLETELRLYNVVAACFTLKLVIERLPQPISAMAYRFGRDEPSRLLTGDYTGHIRMFVFHPERKVTTSGESTVTHVSLQDVLHGAYPPVECVDYGQLLPDIVRAVQFVESVGNVAELFIACAEENPLLSSARGRPRPAMVIHSLDLPAIRRIKFCVPRGVTCFAFEPSNELLVSGGPDCDLRLWDIHRPEKPSVVLVGHTSSITFLFLQDAGEKIYSLDQRKIIKVWDVRNRVLLQTFGQFSTVLVKGVPACAYYNKRARELVVASNKLFVTACCPEIALDRTDGESHTKPVSVLLYNGLYRLVVSCGFDSFIIVWDHRVNRKMTIITEAHTQIRNGVLEPVEITAACFDGKEQMLLTGARNGSLKIWNIGGRTCMRTIQIEEDCEVTGVFWQANRILAMGWNHRVVEFAAFAEQDEYPRGLQWRKQHSDDILCAAVSGSEPGVMATCSYAGELVFWMLETGQPYRRYDATNPRTRLPISFREGRADLMKPRKLTPRRSLFQMPPGQLAHRRLTRILMPSGLEQMRQLSIQALLFLAMRKMLPDRGTLFGSLDNGMVQVWSHHPDGGFKGQFNGIHMAGDRIITLATDKANRFLFTGTALGYVKTWYIENCWIPNEDKFHVNKPALRILFPFLLNDVVPGRAKRSARAQVKPWLLNSYQAHRACVTGLTYLDDTGLLLSCSSDRTVRLWTLGGRYIGLLGSPVNWQPLPMAVPPPADYRFRIPPDLQREVSFTTLKVLRGGKDSSRTARTKSGGGTATVGDIVGVAADRSKHTPMIETYGSPLAEPILNTAVLKLPSKEPMLQTIKLDRTYPSFPLYRHMVAFPVQPLKRTNKTVEENGSDWNELEQLLERTKALQFKDAPSDADAEGTQ</sequence>
<protein>
    <recommendedName>
        <fullName evidence="1">WD repeat-containing protein on Y chromosome</fullName>
        <shortName evidence="1">WD40 Y</shortName>
    </recommendedName>
</protein>
<reference key="1">
    <citation type="journal article" date="2002" name="Science">
        <title>The genome sequence of the malaria mosquito Anopheles gambiae.</title>
        <authorList>
            <person name="Holt R.A."/>
            <person name="Subramanian G.M."/>
            <person name="Halpern A."/>
            <person name="Sutton G.G."/>
            <person name="Charlab R."/>
            <person name="Nusskern D.R."/>
            <person name="Wincker P."/>
            <person name="Clark A.G."/>
            <person name="Ribeiro J.M.C."/>
            <person name="Wides R."/>
            <person name="Salzberg S.L."/>
            <person name="Loftus B.J."/>
            <person name="Yandell M.D."/>
            <person name="Majoros W.H."/>
            <person name="Rusch D.B."/>
            <person name="Lai Z."/>
            <person name="Kraft C.L."/>
            <person name="Abril J.F."/>
            <person name="Anthouard V."/>
            <person name="Arensburger P."/>
            <person name="Atkinson P.W."/>
            <person name="Baden H."/>
            <person name="de Berardinis V."/>
            <person name="Baldwin D."/>
            <person name="Benes V."/>
            <person name="Biedler J."/>
            <person name="Blass C."/>
            <person name="Bolanos R."/>
            <person name="Boscus D."/>
            <person name="Barnstead M."/>
            <person name="Cai S."/>
            <person name="Center A."/>
            <person name="Chaturverdi K."/>
            <person name="Christophides G.K."/>
            <person name="Chrystal M.A.M."/>
            <person name="Clamp M."/>
            <person name="Cravchik A."/>
            <person name="Curwen V."/>
            <person name="Dana A."/>
            <person name="Delcher A."/>
            <person name="Dew I."/>
            <person name="Evans C.A."/>
            <person name="Flanigan M."/>
            <person name="Grundschober-Freimoser A."/>
            <person name="Friedli L."/>
            <person name="Gu Z."/>
            <person name="Guan P."/>
            <person name="Guigo R."/>
            <person name="Hillenmeyer M.E."/>
            <person name="Hladun S.L."/>
            <person name="Hogan J.R."/>
            <person name="Hong Y.S."/>
            <person name="Hoover J."/>
            <person name="Jaillon O."/>
            <person name="Ke Z."/>
            <person name="Kodira C.D."/>
            <person name="Kokoza E."/>
            <person name="Koutsos A."/>
            <person name="Letunic I."/>
            <person name="Levitsky A.A."/>
            <person name="Liang Y."/>
            <person name="Lin J.-J."/>
            <person name="Lobo N.F."/>
            <person name="Lopez J.R."/>
            <person name="Malek J.A."/>
            <person name="McIntosh T.C."/>
            <person name="Meister S."/>
            <person name="Miller J.R."/>
            <person name="Mobarry C."/>
            <person name="Mongin E."/>
            <person name="Murphy S.D."/>
            <person name="O'Brochta D.A."/>
            <person name="Pfannkoch C."/>
            <person name="Qi R."/>
            <person name="Regier M.A."/>
            <person name="Remington K."/>
            <person name="Shao H."/>
            <person name="Sharakhova M.V."/>
            <person name="Sitter C.D."/>
            <person name="Shetty J."/>
            <person name="Smith T.J."/>
            <person name="Strong R."/>
            <person name="Sun J."/>
            <person name="Thomasova D."/>
            <person name="Ton L.Q."/>
            <person name="Topalis P."/>
            <person name="Tu Z.J."/>
            <person name="Unger M.F."/>
            <person name="Walenz B."/>
            <person name="Wang A.H."/>
            <person name="Wang J."/>
            <person name="Wang M."/>
            <person name="Wang X."/>
            <person name="Woodford K.J."/>
            <person name="Wortman J.R."/>
            <person name="Wu M."/>
            <person name="Yao A."/>
            <person name="Zdobnov E.M."/>
            <person name="Zhang H."/>
            <person name="Zhao Q."/>
            <person name="Zhao S."/>
            <person name="Zhu S.C."/>
            <person name="Zhimulev I."/>
            <person name="Coluzzi M."/>
            <person name="della Torre A."/>
            <person name="Roth C.W."/>
            <person name="Louis C."/>
            <person name="Kalush F."/>
            <person name="Mural R.J."/>
            <person name="Myers E.W."/>
            <person name="Adams M.D."/>
            <person name="Smith H.O."/>
            <person name="Broder S."/>
            <person name="Gardner M.J."/>
            <person name="Fraser C.M."/>
            <person name="Birney E."/>
            <person name="Bork P."/>
            <person name="Brey P.T."/>
            <person name="Venter J.C."/>
            <person name="Weissenbach J."/>
            <person name="Kafatos F.C."/>
            <person name="Collins F.H."/>
            <person name="Hoffman S.L."/>
        </authorList>
    </citation>
    <scope>NUCLEOTIDE SEQUENCE [LARGE SCALE GENOMIC DNA]</scope>
    <source>
        <strain>PEST</strain>
    </source>
</reference>
<organism>
    <name type="scientific">Anopheles gambiae</name>
    <name type="common">African malaria mosquito</name>
    <dbReference type="NCBI Taxonomy" id="7165"/>
    <lineage>
        <taxon>Eukaryota</taxon>
        <taxon>Metazoa</taxon>
        <taxon>Ecdysozoa</taxon>
        <taxon>Arthropoda</taxon>
        <taxon>Hexapoda</taxon>
        <taxon>Insecta</taxon>
        <taxon>Pterygota</taxon>
        <taxon>Neoptera</taxon>
        <taxon>Endopterygota</taxon>
        <taxon>Diptera</taxon>
        <taxon>Nematocera</taxon>
        <taxon>Culicoidea</taxon>
        <taxon>Culicidae</taxon>
        <taxon>Anophelinae</taxon>
        <taxon>Anopheles</taxon>
    </lineage>
</organism>